<evidence type="ECO:0000250" key="1">
    <source>
        <dbReference type="UniProtKB" id="P03261"/>
    </source>
</evidence>
<evidence type="ECO:0000250" key="2">
    <source>
        <dbReference type="UniProtKB" id="P04495"/>
    </source>
</evidence>
<evidence type="ECO:0000255" key="3">
    <source>
        <dbReference type="HAMAP-Rule" id="MF_04055"/>
    </source>
</evidence>
<evidence type="ECO:0000256" key="4">
    <source>
        <dbReference type="SAM" id="MobiDB-lite"/>
    </source>
</evidence>
<evidence type="ECO:0000305" key="5"/>
<proteinExistence type="inferred from homology"/>
<accession>Q65946</accession>
<protein>
    <recommendedName>
        <fullName evidence="3">DNA polymerase</fullName>
        <ecNumber evidence="3">2.7.7.7</ecNumber>
    </recommendedName>
</protein>
<name>DPOL_ADECC</name>
<reference key="1">
    <citation type="submission" date="1996-08" db="EMBL/GenBank/DDBJ databases">
        <title>DNA sequence and genomic organization of canine adenovirus type 1.</title>
        <authorList>
            <person name="Campbell J.B."/>
            <person name="Zhao Y."/>
        </authorList>
    </citation>
    <scope>NUCLEOTIDE SEQUENCE [LARGE SCALE GENOMIC DNA]</scope>
</reference>
<dbReference type="EC" id="2.7.7.7" evidence="3"/>
<dbReference type="EMBL" id="U55001">
    <property type="protein sequence ID" value="AAB05434.1"/>
    <property type="molecule type" value="Genomic_DNA"/>
</dbReference>
<dbReference type="GO" id="GO:0042025">
    <property type="term" value="C:host cell nucleus"/>
    <property type="evidence" value="ECO:0007669"/>
    <property type="project" value="UniProtKB-SubCell"/>
</dbReference>
<dbReference type="GO" id="GO:0008408">
    <property type="term" value="F:3'-5' exonuclease activity"/>
    <property type="evidence" value="ECO:0007669"/>
    <property type="project" value="UniProtKB-UniRule"/>
</dbReference>
<dbReference type="GO" id="GO:0003677">
    <property type="term" value="F:DNA binding"/>
    <property type="evidence" value="ECO:0007669"/>
    <property type="project" value="UniProtKB-UniRule"/>
</dbReference>
<dbReference type="GO" id="GO:0003887">
    <property type="term" value="F:DNA-directed DNA polymerase activity"/>
    <property type="evidence" value="ECO:0007669"/>
    <property type="project" value="UniProtKB-UniRule"/>
</dbReference>
<dbReference type="GO" id="GO:0000166">
    <property type="term" value="F:nucleotide binding"/>
    <property type="evidence" value="ECO:0007669"/>
    <property type="project" value="UniProtKB-UniRule"/>
</dbReference>
<dbReference type="GO" id="GO:0006261">
    <property type="term" value="P:DNA-templated DNA replication"/>
    <property type="evidence" value="ECO:0007669"/>
    <property type="project" value="UniProtKB-UniRule"/>
</dbReference>
<dbReference type="GO" id="GO:0039693">
    <property type="term" value="P:viral DNA genome replication"/>
    <property type="evidence" value="ECO:0007669"/>
    <property type="project" value="UniProtKB-UniRule"/>
</dbReference>
<dbReference type="Gene3D" id="1.10.287.690">
    <property type="entry name" value="Helix hairpin bin"/>
    <property type="match status" value="1"/>
</dbReference>
<dbReference type="Gene3D" id="3.90.1600.10">
    <property type="entry name" value="Palm domain of DNA polymerase"/>
    <property type="match status" value="1"/>
</dbReference>
<dbReference type="Gene3D" id="3.30.1770.10">
    <property type="entry name" value="TPR 1 domain of DNA polymerase"/>
    <property type="match status" value="1"/>
</dbReference>
<dbReference type="HAMAP" id="MF_04055">
    <property type="entry name" value="ADV_DPOL"/>
    <property type="match status" value="1"/>
</dbReference>
<dbReference type="InterPro" id="IPR006172">
    <property type="entry name" value="DNA-dir_DNA_pol_B"/>
</dbReference>
<dbReference type="InterPro" id="IPR014382">
    <property type="entry name" value="DNA-dir_DNA_pol_B_adenovir"/>
</dbReference>
<dbReference type="InterPro" id="IPR017964">
    <property type="entry name" value="DNA-dir_DNA_pol_B_CS"/>
</dbReference>
<dbReference type="InterPro" id="IPR004868">
    <property type="entry name" value="DNA-dir_DNA_pol_B_mt/vir"/>
</dbReference>
<dbReference type="InterPro" id="IPR043502">
    <property type="entry name" value="DNA/RNA_pol_sf"/>
</dbReference>
<dbReference type="InterPro" id="IPR023211">
    <property type="entry name" value="DNA_pol_palm_dom_sf"/>
</dbReference>
<dbReference type="InterPro" id="IPR012337">
    <property type="entry name" value="RNaseH-like_sf"/>
</dbReference>
<dbReference type="PANTHER" id="PTHR33568">
    <property type="entry name" value="DNA POLYMERASE"/>
    <property type="match status" value="1"/>
</dbReference>
<dbReference type="PANTHER" id="PTHR33568:SF3">
    <property type="entry name" value="DNA-DIRECTED DNA POLYMERASE"/>
    <property type="match status" value="1"/>
</dbReference>
<dbReference type="Pfam" id="PF03175">
    <property type="entry name" value="DNA_pol_B_2"/>
    <property type="match status" value="1"/>
</dbReference>
<dbReference type="PIRSF" id="PIRSF000788">
    <property type="entry name" value="DPol_ADV"/>
    <property type="match status" value="1"/>
</dbReference>
<dbReference type="PRINTS" id="PR00106">
    <property type="entry name" value="DNAPOLB"/>
</dbReference>
<dbReference type="SMART" id="SM00486">
    <property type="entry name" value="POLBc"/>
    <property type="match status" value="1"/>
</dbReference>
<dbReference type="SUPFAM" id="SSF56672">
    <property type="entry name" value="DNA/RNA polymerases"/>
    <property type="match status" value="1"/>
</dbReference>
<dbReference type="SUPFAM" id="SSF53098">
    <property type="entry name" value="Ribonuclease H-like"/>
    <property type="match status" value="1"/>
</dbReference>
<dbReference type="PROSITE" id="PS00116">
    <property type="entry name" value="DNA_POLYMERASE_B"/>
    <property type="match status" value="1"/>
</dbReference>
<organism>
    <name type="scientific">Canine adenovirus serotype 1 (strain CLL)</name>
    <name type="common">CAdV-1</name>
    <name type="synonym">Canine adenovirus 1 (strain CLL)</name>
    <dbReference type="NCBI Taxonomy" id="69150"/>
    <lineage>
        <taxon>Viruses</taxon>
        <taxon>Varidnaviria</taxon>
        <taxon>Bamfordvirae</taxon>
        <taxon>Preplasmiviricota</taxon>
        <taxon>Tectiliviricetes</taxon>
        <taxon>Rowavirales</taxon>
        <taxon>Adenoviridae</taxon>
        <taxon>Mastadenovirus</taxon>
        <taxon>Canine mastadenovirus A</taxon>
    </lineage>
</organism>
<comment type="function">
    <text evidence="1 2 3">Eukaryotic-type DNA polymerase involved in viral genomic replication. DNA synthesis is protein primed, and acts in a strand displacement replication. Assembles in complex with viral pTP, DBP, host NFIA and host POU2F1/OCT1 on viral origin of replication. The polymerase covalently transfers dCMP onto pTP, thereby initiating complementary strand synthesis.</text>
</comment>
<comment type="catalytic activity">
    <reaction evidence="3">
        <text>DNA(n) + a 2'-deoxyribonucleoside 5'-triphosphate = DNA(n+1) + diphosphate</text>
        <dbReference type="Rhea" id="RHEA:22508"/>
        <dbReference type="Rhea" id="RHEA-COMP:17339"/>
        <dbReference type="Rhea" id="RHEA-COMP:17340"/>
        <dbReference type="ChEBI" id="CHEBI:33019"/>
        <dbReference type="ChEBI" id="CHEBI:61560"/>
        <dbReference type="ChEBI" id="CHEBI:173112"/>
        <dbReference type="EC" id="2.7.7.7"/>
    </reaction>
</comment>
<comment type="subunit">
    <text evidence="2 3">Heterodimer with the terminal protein; this heterodimer binds to bp 9 to 18 of the genome. Forms a complex with viral pTP, DBP and hosts NFIA and POU2F1/OCT1 for initiation of replication.</text>
</comment>
<comment type="subcellular location">
    <subcellularLocation>
        <location evidence="1 3">Host nucleus</location>
    </subcellularLocation>
</comment>
<comment type="miscellaneous">
    <text evidence="3">This DNA polymerase requires a protein as a primer.</text>
</comment>
<comment type="similarity">
    <text evidence="3 5">Belongs to the DNA polymerase type-B family.</text>
</comment>
<keyword id="KW-0235">DNA replication</keyword>
<keyword id="KW-0238">DNA-binding</keyword>
<keyword id="KW-0239">DNA-directed DNA polymerase</keyword>
<keyword id="KW-1048">Host nucleus</keyword>
<keyword id="KW-0548">Nucleotidyltransferase</keyword>
<keyword id="KW-0808">Transferase</keyword>
<keyword id="KW-1194">Viral DNA replication</keyword>
<sequence length="1149" mass="130939">MSLVQSHGTSGLFTEPPNSINQQESSGPSLPAQDATQASASSARAGATPAINSTKRKYRGAVVAQRATLSISAILDNGQCVQIKYHSNLASALTNLCNTNLYDLPACLNKPITVHNLPTLIEEAAASYSLIYYYQRGTVRKVEFRAEIPLLSFPLKFLVKHGKVFLIKDISPMQRCEFCGSFFKVTHTCTLRRRDFYFHHVASHSGDWWEKISFSPIGAPANTERLFIVYDVETYTWHGKFGKQLVPFMLVFQLLGDEHLVNAAKNLATTQNWDTWNSNEQTALYYCITPEKRAIGVKFKTFRDTLQQHFANNLWSHVLCQNPKLMEEAAALGLENPEDITANQLKKFKLQGTPRFIEVYVVGHNITGFDEILLAAQVVSTRAEIPPVFDISRNFMPRAGRLLFNDITYSLPNPSYVPSKDYRHWEQGQVLASDLKTQYIKFMVRDTFSLTHTSLKNAAKAYSLTVSKGCCPYQAVNEFYMLGSYQQDADGFPDLKYWKDQEEYCFNKDLWKKEKKGAYDIIQQTLDYCALDVQVTAQLVNKLIESYQIFIKNSVNLPETYFNVFQRPTISSNSHAIFKQILYRAEKPNAPHLNTIIMAPSNEMYEYVRLSIRGGRCYPTYIGVLQEPVFVYDICGMYASALTHPFPAGSPLNPYERAVAIKAYEHKMQEHKTISYFDEDLLPGIFTIDADPPAEEFLDVLPPFCSRKGGRLCWTNEPLRGEVTTSIDVITLHNRGWKVTLIPDTRTTVFPEWKCLAREYVQLNINAKEKADKSKNQTMRSIAKLLSNALYGSFATKLDNKKTVFSDQIESNIAKEIASGAYVVKSSSYIETDNLCAEIMPEFVVAYPPVNFDVHRLAPPSYSEEYPTENPHAEGPFMQNFNMTSYRYKPIMFIDAEDDDFCLHTLEKSTPLITNNRYASQIASFVLAWTRAFVSEWSQFLYENDAGIPLEKRILKSVYGDTDSLFTTMEGYRLMEEKGKRRLKKNGGNLVFDPNNPELTWLVECETKCEKCGADAYSSESVYLAPKLYALKDTTCPECQYVGKGKLRAKGHATSTLSYDVLKACYYADLQQGSDIFKTSRMSLRRTLTSVQTHVQPFTVTETTLTRKLRPWKDKTLHALDMNRLIPYSRKYPNPRNNETTWMELQWMT</sequence>
<gene>
    <name evidence="3" type="primary">POL</name>
</gene>
<organismHost>
    <name type="scientific">Canis lupus familiaris</name>
    <name type="common">Dog</name>
    <name type="synonym">Canis familiaris</name>
    <dbReference type="NCBI Taxonomy" id="9615"/>
</organismHost>
<feature type="chain" id="PRO_0000046498" description="DNA polymerase">
    <location>
        <begin position="1"/>
        <end position="1149"/>
    </location>
</feature>
<feature type="region of interest" description="Disordered" evidence="4">
    <location>
        <begin position="1"/>
        <end position="49"/>
    </location>
</feature>
<feature type="compositionally biased region" description="Polar residues" evidence="4">
    <location>
        <begin position="1"/>
        <end position="28"/>
    </location>
</feature>
<feature type="compositionally biased region" description="Low complexity" evidence="4">
    <location>
        <begin position="31"/>
        <end position="49"/>
    </location>
</feature>